<gene>
    <name type="primary">PRNP</name>
    <name type="synonym">PRP</name>
</gene>
<sequence>MANLGCWMLVLFVATWSNLGLCKKRPKPGGWNTGGSRYPGQGSPGGNRYPPQGGGGWGQPHGGGWGQPHGGGWGQPHGGGWGQPHGGGWGQGGGTHSQWNKPSKPKTNMKHMAGAAAAGAVVGGLGGYMLGSAMSRPIIHFGNDYEDRYYRENMYRYPNQVYYRPVDQYSNQNNFVHDCVNITIKQHTVTTTTKGENFTETDVKMMERVVEQMCITQYERESQAYYQRGSSMVLFSSPPVILLISFLIFLIVG</sequence>
<name>PRIO_PONPY</name>
<organism>
    <name type="scientific">Pongo pygmaeus</name>
    <name type="common">Bornean orangutan</name>
    <dbReference type="NCBI Taxonomy" id="9600"/>
    <lineage>
        <taxon>Eukaryota</taxon>
        <taxon>Metazoa</taxon>
        <taxon>Chordata</taxon>
        <taxon>Craniata</taxon>
        <taxon>Vertebrata</taxon>
        <taxon>Euteleostomi</taxon>
        <taxon>Mammalia</taxon>
        <taxon>Eutheria</taxon>
        <taxon>Euarchontoglires</taxon>
        <taxon>Primates</taxon>
        <taxon>Haplorrhini</taxon>
        <taxon>Catarrhini</taxon>
        <taxon>Hominidae</taxon>
        <taxon>Pongo</taxon>
    </lineage>
</organism>
<accession>P40256</accession>
<proteinExistence type="evidence at transcript level"/>
<protein>
    <recommendedName>
        <fullName>Major prion protein</fullName>
        <shortName>PrP</shortName>
    </recommendedName>
    <alternativeName>
        <fullName>PrP27-30</fullName>
    </alternativeName>
    <alternativeName>
        <fullName>PrP33-35C</fullName>
    </alternativeName>
    <cdAntigenName>CD230</cdAntigenName>
</protein>
<keyword id="KW-0034">Amyloid</keyword>
<keyword id="KW-1003">Cell membrane</keyword>
<keyword id="KW-0186">Copper</keyword>
<keyword id="KW-1015">Disulfide bond</keyword>
<keyword id="KW-0325">Glycoprotein</keyword>
<keyword id="KW-0333">Golgi apparatus</keyword>
<keyword id="KW-0336">GPI-anchor</keyword>
<keyword id="KW-0449">Lipoprotein</keyword>
<keyword id="KW-0472">Membrane</keyword>
<keyword id="KW-0479">Metal-binding</keyword>
<keyword id="KW-0640">Prion</keyword>
<keyword id="KW-0677">Repeat</keyword>
<keyword id="KW-0732">Signal</keyword>
<keyword id="KW-0862">Zinc</keyword>
<comment type="function">
    <text evidence="2 4">Its primary physiological function is unclear. May play a role in neuronal development and synaptic plasticity. May be required for neuronal myelin sheath maintenance. May promote myelin homeostasis through acting as an agonist for ADGRG6 receptor. May play a role in iron uptake and iron homeostasis. Soluble oligomers are toxic to cultured neuroblastoma cells and induce apoptosis (in vitro) (By similarity). Association with GPC1 (via its heparan sulfate chains) targets PRNP to lipid rafts. Also provides Cu(2+) or Zn(2+) for the ascorbate-mediated GPC1 deaminase degradation of its heparan sulfate side chains (By similarity).</text>
</comment>
<comment type="subunit">
    <text evidence="2 4">Monomer and homodimer. Has a tendency to aggregate into amyloid fibrils containing a cross-beta spine, formed by a steric zipper of superposed beta-strands. Soluble oligomers may represent an intermediate stage on the path to fibril formation. Copper binding may promote oligomerization. Interacts with GRB2, APP, ERI3/PRNPIP and SYN1 (By similarity). Mislocalized cytosolically exposed PrP interacts with MGRN1; this interaction alters MGRN1 subcellular location and causes lysosomal enlargement (By similarity). Interacts with APP. Interacts with KIAA1191 (By similarity). Interacts with ADGRG6 (By similarity).</text>
</comment>
<comment type="subcellular location">
    <subcellularLocation>
        <location evidence="2">Cell membrane</location>
        <topology evidence="2">Lipid-anchor</topology>
        <topology evidence="2">GPI-anchor</topology>
    </subcellularLocation>
    <subcellularLocation>
        <location evidence="4">Golgi apparatus</location>
    </subcellularLocation>
    <text evidence="2">Targeted to lipid rafts via association with the heparan sulfate chains of GPC1. Colocates, in the presence of Cu(2+), to vesicles in para- and perinuclear regions, where both proteins undergo internalization. Heparin displaces PRNP from lipid rafts and promotes endocytosis.</text>
</comment>
<comment type="domain">
    <text evidence="2">The normal, monomeric form has a mainly alpha-helical structure. The disease-associated, protease-resistant form forms amyloid fibrils containing a cross-beta spine, formed by a steric zipper of superposed beta-strands. Disease mutations may favor intermolecular contacts via short beta strands, and may thereby trigger oligomerization.</text>
</comment>
<comment type="domain">
    <text evidence="2">Contains an N-terminal region composed of octamer repeats. At low copper concentrations, the sidechains of His residues from three or four repeats contribute to the binding of a single copper ion. Alternatively, a copper ion can be bound by interaction with the sidechain and backbone amide nitrogen of a single His residue. The observed copper binding stoichiometry suggests that two repeat regions cooperate to stabilize the binding of a single copper ion. At higher copper concentrations, each octamer can bind one copper ion by interactions with the His sidechain and Gly backbone atoms. A mixture of binding types may occur, especially in the case of octamer repeat expansion. Copper binding may stabilize the conformation of this region and may promote oligomerization.</text>
</comment>
<comment type="disease">
    <text evidence="7">PrP is found in high quantity in the brain of humans and animals infected with the degenerative neurological diseases kuru, Creutzfeldt-Jakob disease (CJD), Gerstmann-Straussler syndrome (GSS), scrapie, bovine spongiform encephalopathy (BSE), transmissible mink encephalopathy (TME), etc.</text>
</comment>
<comment type="similarity">
    <text evidence="7">Belongs to the prion family.</text>
</comment>
<dbReference type="EMBL" id="U08305">
    <property type="protein sequence ID" value="AAC50093.1"/>
    <property type="molecule type" value="Genomic_DNA"/>
</dbReference>
<dbReference type="EMBL" id="CR860802">
    <property type="protein sequence ID" value="CAH92912.1"/>
    <property type="molecule type" value="mRNA"/>
</dbReference>
<dbReference type="PIR" id="S53616">
    <property type="entry name" value="S53616"/>
</dbReference>
<dbReference type="BMRB" id="P40256"/>
<dbReference type="SMR" id="P40256"/>
<dbReference type="GlyCosmos" id="P40256">
    <property type="glycosylation" value="2 sites, No reported glycans"/>
</dbReference>
<dbReference type="KEGG" id="pon:100173712"/>
<dbReference type="GO" id="GO:0005794">
    <property type="term" value="C:Golgi apparatus"/>
    <property type="evidence" value="ECO:0007669"/>
    <property type="project" value="UniProtKB-SubCell"/>
</dbReference>
<dbReference type="GO" id="GO:0005886">
    <property type="term" value="C:plasma membrane"/>
    <property type="evidence" value="ECO:0007669"/>
    <property type="project" value="UniProtKB-SubCell"/>
</dbReference>
<dbReference type="GO" id="GO:0098552">
    <property type="term" value="C:side of membrane"/>
    <property type="evidence" value="ECO:0007669"/>
    <property type="project" value="UniProtKB-KW"/>
</dbReference>
<dbReference type="GO" id="GO:0005507">
    <property type="term" value="F:copper ion binding"/>
    <property type="evidence" value="ECO:0000250"/>
    <property type="project" value="UniProtKB"/>
</dbReference>
<dbReference type="GO" id="GO:0051260">
    <property type="term" value="P:protein homooligomerization"/>
    <property type="evidence" value="ECO:0007669"/>
    <property type="project" value="InterPro"/>
</dbReference>
<dbReference type="FunFam" id="1.10.790.10:FF:000001">
    <property type="entry name" value="Major prion protein"/>
    <property type="match status" value="1"/>
</dbReference>
<dbReference type="Gene3D" id="1.10.790.10">
    <property type="entry name" value="Prion/Doppel protein, beta-ribbon domain"/>
    <property type="match status" value="1"/>
</dbReference>
<dbReference type="InterPro" id="IPR000817">
    <property type="entry name" value="Prion"/>
</dbReference>
<dbReference type="InterPro" id="IPR036924">
    <property type="entry name" value="Prion/Doppel_b-ribbon_dom_sf"/>
</dbReference>
<dbReference type="InterPro" id="IPR022416">
    <property type="entry name" value="Prion/Doppel_prot_b-ribbon_dom"/>
</dbReference>
<dbReference type="InterPro" id="IPR020949">
    <property type="entry name" value="Prion_copper_b_octapeptide"/>
</dbReference>
<dbReference type="InterPro" id="IPR025860">
    <property type="entry name" value="Prion_N"/>
</dbReference>
<dbReference type="PANTHER" id="PTHR15506">
    <property type="entry name" value="DOPPEL PRION"/>
    <property type="match status" value="1"/>
</dbReference>
<dbReference type="PANTHER" id="PTHR15506:SF2">
    <property type="entry name" value="MAJOR PRION PROTEIN"/>
    <property type="match status" value="1"/>
</dbReference>
<dbReference type="Pfam" id="PF00377">
    <property type="entry name" value="Prion"/>
    <property type="match status" value="1"/>
</dbReference>
<dbReference type="Pfam" id="PF11587">
    <property type="entry name" value="Prion_bPrPp"/>
    <property type="match status" value="1"/>
</dbReference>
<dbReference type="Pfam" id="PF03991">
    <property type="entry name" value="Prion_octapep"/>
    <property type="match status" value="1"/>
</dbReference>
<dbReference type="PRINTS" id="PR00341">
    <property type="entry name" value="PRION"/>
</dbReference>
<dbReference type="SMART" id="SM00157">
    <property type="entry name" value="PRP"/>
    <property type="match status" value="1"/>
</dbReference>
<dbReference type="SUPFAM" id="SSF54098">
    <property type="entry name" value="Prion-like"/>
    <property type="match status" value="1"/>
</dbReference>
<dbReference type="PROSITE" id="PS00291">
    <property type="entry name" value="PRION_1"/>
    <property type="match status" value="1"/>
</dbReference>
<dbReference type="PROSITE" id="PS00706">
    <property type="entry name" value="PRION_2"/>
    <property type="match status" value="1"/>
</dbReference>
<reference key="1">
    <citation type="journal article" date="1995" name="J. Mol. Biol.">
        <title>Prion protein gene variation among primates.</title>
        <authorList>
            <person name="Schaetzl H.M."/>
            <person name="Da Costa M."/>
            <person name="Taylor L."/>
            <person name="Cohen F.E."/>
            <person name="Prusiner S.B."/>
        </authorList>
    </citation>
    <scope>NUCLEOTIDE SEQUENCE [GENOMIC DNA]</scope>
</reference>
<reference key="2">
    <citation type="submission" date="2004-11" db="EMBL/GenBank/DDBJ databases">
        <authorList>
            <consortium name="The German cDNA consortium"/>
        </authorList>
    </citation>
    <scope>NUCLEOTIDE SEQUENCE [LARGE SCALE MRNA]</scope>
    <source>
        <tissue>Brain cortex</tissue>
    </source>
</reference>
<feature type="signal peptide" evidence="1">
    <location>
        <begin position="1"/>
        <end position="22"/>
    </location>
</feature>
<feature type="chain" id="PRO_0000025717" description="Major prion protein">
    <location>
        <begin position="23"/>
        <end position="230"/>
    </location>
</feature>
<feature type="propeptide" id="PRO_0000025718" description="Removed in mature form" evidence="1">
    <location>
        <begin position="231"/>
        <end position="253"/>
    </location>
</feature>
<feature type="repeat" description="1">
    <location>
        <begin position="51"/>
        <end position="59"/>
    </location>
</feature>
<feature type="repeat" description="2">
    <location>
        <begin position="60"/>
        <end position="67"/>
    </location>
</feature>
<feature type="repeat" description="3">
    <location>
        <begin position="68"/>
        <end position="75"/>
    </location>
</feature>
<feature type="repeat" description="4">
    <location>
        <begin position="76"/>
        <end position="83"/>
    </location>
</feature>
<feature type="repeat" description="5">
    <location>
        <begin position="84"/>
        <end position="91"/>
    </location>
</feature>
<feature type="region of interest" description="Interaction with GRB2, ERI3 and SYN1" evidence="4">
    <location>
        <begin position="23"/>
        <end position="230"/>
    </location>
</feature>
<feature type="region of interest" description="Interaction with ADGRG6" evidence="4">
    <location>
        <begin position="23"/>
        <end position="38"/>
    </location>
</feature>
<feature type="region of interest" description="Disordered" evidence="6">
    <location>
        <begin position="25"/>
        <end position="108"/>
    </location>
</feature>
<feature type="region of interest" description="5 X 8 AA tandem repeats of P-H-G-G-G-W-G-Q">
    <location>
        <begin position="51"/>
        <end position="91"/>
    </location>
</feature>
<feature type="compositionally biased region" description="Gly residues" evidence="6">
    <location>
        <begin position="52"/>
        <end position="95"/>
    </location>
</feature>
<feature type="binding site" evidence="2">
    <location>
        <position position="61"/>
    </location>
    <ligand>
        <name>Cu(2+)</name>
        <dbReference type="ChEBI" id="CHEBI:29036"/>
        <label>1</label>
    </ligand>
</feature>
<feature type="binding site" evidence="2">
    <location>
        <position position="62"/>
    </location>
    <ligand>
        <name>Cu(2+)</name>
        <dbReference type="ChEBI" id="CHEBI:29036"/>
        <label>1</label>
    </ligand>
</feature>
<feature type="binding site" evidence="2">
    <location>
        <position position="63"/>
    </location>
    <ligand>
        <name>Cu(2+)</name>
        <dbReference type="ChEBI" id="CHEBI:29036"/>
        <label>1</label>
    </ligand>
</feature>
<feature type="binding site" evidence="2">
    <location>
        <position position="69"/>
    </location>
    <ligand>
        <name>Cu(2+)</name>
        <dbReference type="ChEBI" id="CHEBI:29036"/>
        <label>2</label>
    </ligand>
</feature>
<feature type="binding site" evidence="2">
    <location>
        <position position="70"/>
    </location>
    <ligand>
        <name>Cu(2+)</name>
        <dbReference type="ChEBI" id="CHEBI:29036"/>
        <label>2</label>
    </ligand>
</feature>
<feature type="binding site" evidence="2">
    <location>
        <position position="71"/>
    </location>
    <ligand>
        <name>Cu(2+)</name>
        <dbReference type="ChEBI" id="CHEBI:29036"/>
        <label>2</label>
    </ligand>
</feature>
<feature type="binding site" evidence="2">
    <location>
        <position position="77"/>
    </location>
    <ligand>
        <name>Cu(2+)</name>
        <dbReference type="ChEBI" id="CHEBI:29036"/>
        <label>3</label>
    </ligand>
</feature>
<feature type="binding site" evidence="2">
    <location>
        <position position="78"/>
    </location>
    <ligand>
        <name>Cu(2+)</name>
        <dbReference type="ChEBI" id="CHEBI:29036"/>
        <label>3</label>
    </ligand>
</feature>
<feature type="binding site" evidence="2">
    <location>
        <position position="79"/>
    </location>
    <ligand>
        <name>Cu(2+)</name>
        <dbReference type="ChEBI" id="CHEBI:29036"/>
        <label>3</label>
    </ligand>
</feature>
<feature type="binding site" evidence="2">
    <location>
        <position position="85"/>
    </location>
    <ligand>
        <name>Cu(2+)</name>
        <dbReference type="ChEBI" id="CHEBI:29036"/>
        <label>4</label>
    </ligand>
</feature>
<feature type="binding site" evidence="2">
    <location>
        <position position="86"/>
    </location>
    <ligand>
        <name>Cu(2+)</name>
        <dbReference type="ChEBI" id="CHEBI:29036"/>
        <label>4</label>
    </ligand>
</feature>
<feature type="binding site" evidence="2">
    <location>
        <position position="87"/>
    </location>
    <ligand>
        <name>Cu(2+)</name>
        <dbReference type="ChEBI" id="CHEBI:29036"/>
        <label>4</label>
    </ligand>
</feature>
<feature type="lipid moiety-binding region" description="GPI-anchor amidated serine" evidence="3">
    <location>
        <position position="230"/>
    </location>
</feature>
<feature type="glycosylation site" description="N-linked (GlcNAc...) asparagine" evidence="5">
    <location>
        <position position="181"/>
    </location>
</feature>
<feature type="glycosylation site" description="N-linked (GlcNAc...) asparagine" evidence="5">
    <location>
        <position position="197"/>
    </location>
</feature>
<feature type="disulfide bond" evidence="3">
    <location>
        <begin position="179"/>
        <end position="214"/>
    </location>
</feature>
<evidence type="ECO:0000250" key="1"/>
<evidence type="ECO:0000250" key="2">
    <source>
        <dbReference type="UniProtKB" id="P04156"/>
    </source>
</evidence>
<evidence type="ECO:0000250" key="3">
    <source>
        <dbReference type="UniProtKB" id="P04273"/>
    </source>
</evidence>
<evidence type="ECO:0000250" key="4">
    <source>
        <dbReference type="UniProtKB" id="P04925"/>
    </source>
</evidence>
<evidence type="ECO:0000255" key="5"/>
<evidence type="ECO:0000256" key="6">
    <source>
        <dbReference type="SAM" id="MobiDB-lite"/>
    </source>
</evidence>
<evidence type="ECO:0000305" key="7"/>